<accession>Q9Y5L5</accession>
<accession>B5BUM1</accession>
<accession>Q5T1A4</accession>
<evidence type="ECO:0000269" key="1">
    <source>
    </source>
</evidence>
<comment type="function">
    <text>May play a role in lens epithelial cell differentiation.</text>
</comment>
<comment type="interaction">
    <interactant intactId="EBI-12913546">
        <id>Q9Y5L5</id>
    </interactant>
    <interactant intactId="EBI-12878352">
        <id>A0PK05</id>
        <label>TMEM72</label>
    </interactant>
    <organismsDiffer>false</organismsDiffer>
    <experiments>3</experiments>
</comment>
<comment type="tissue specificity">
    <text evidence="1">Restricted to lens epithelial cells.</text>
</comment>
<sequence length="61" mass="6908">MQPRTQPLAQTLPFFLGGAPRDTGLRVPVIKMGTGWEGFQRTLKEVAYILLCCWCIKELLD</sequence>
<feature type="chain" id="PRO_0000084403" description="Lens epithelial cell protein LEP503">
    <location>
        <begin position="1"/>
        <end position="61"/>
    </location>
</feature>
<keyword id="KW-1185">Reference proteome</keyword>
<gene>
    <name type="primary">LENEP</name>
    <name type="synonym">LEP503</name>
</gene>
<reference key="1">
    <citation type="journal article" date="2000" name="Exp. Eye Res.">
        <title>A novel lens epithelium gene, LEP503, is highly conserved in different vertebrate species and is developmentally regulated in postnatal rat lens.</title>
        <authorList>
            <person name="Wen Y."/>
            <person name="Sachs G."/>
            <person name="Athmann C."/>
        </authorList>
    </citation>
    <scope>NUCLEOTIDE SEQUENCE [MRNA]</scope>
</reference>
<reference key="2">
    <citation type="journal article" date="2001" name="Gene">
        <title>Functional analysis of the promoter and chromosomal localization for human LEP503, a novel lens epithelium gene.</title>
        <authorList>
            <person name="Wen Y."/>
            <person name="Ibaraki N."/>
            <person name="Reddy V.N."/>
            <person name="Sachs G."/>
        </authorList>
    </citation>
    <scope>NUCLEOTIDE SEQUENCE [GENOMIC DNA]</scope>
    <scope>TISSUE SPECIFICITY</scope>
</reference>
<reference key="3">
    <citation type="journal article" date="2008" name="Nat. Methods">
        <title>Human protein factory for converting the transcriptome into an in vitro-expressed proteome.</title>
        <authorList>
            <person name="Goshima N."/>
            <person name="Kawamura Y."/>
            <person name="Fukumoto A."/>
            <person name="Miura A."/>
            <person name="Honma R."/>
            <person name="Satoh R."/>
            <person name="Wakamatsu A."/>
            <person name="Yamamoto J."/>
            <person name="Kimura K."/>
            <person name="Nishikawa T."/>
            <person name="Andoh T."/>
            <person name="Iida Y."/>
            <person name="Ishikawa K."/>
            <person name="Ito E."/>
            <person name="Kagawa N."/>
            <person name="Kaminaga C."/>
            <person name="Kanehori K."/>
            <person name="Kawakami B."/>
            <person name="Kenmochi K."/>
            <person name="Kimura R."/>
            <person name="Kobayashi M."/>
            <person name="Kuroita T."/>
            <person name="Kuwayama H."/>
            <person name="Maruyama Y."/>
            <person name="Matsuo K."/>
            <person name="Minami K."/>
            <person name="Mitsubori M."/>
            <person name="Mori M."/>
            <person name="Morishita R."/>
            <person name="Murase A."/>
            <person name="Nishikawa A."/>
            <person name="Nishikawa S."/>
            <person name="Okamoto T."/>
            <person name="Sakagami N."/>
            <person name="Sakamoto Y."/>
            <person name="Sasaki Y."/>
            <person name="Seki T."/>
            <person name="Sono S."/>
            <person name="Sugiyama A."/>
            <person name="Sumiya T."/>
            <person name="Takayama T."/>
            <person name="Takayama Y."/>
            <person name="Takeda H."/>
            <person name="Togashi T."/>
            <person name="Yahata K."/>
            <person name="Yamada H."/>
            <person name="Yanagisawa Y."/>
            <person name="Endo Y."/>
            <person name="Imamoto F."/>
            <person name="Kisu Y."/>
            <person name="Tanaka S."/>
            <person name="Isogai T."/>
            <person name="Imai J."/>
            <person name="Watanabe S."/>
            <person name="Nomura N."/>
        </authorList>
    </citation>
    <scope>NUCLEOTIDE SEQUENCE [LARGE SCALE MRNA]</scope>
</reference>
<reference key="4">
    <citation type="journal article" date="2006" name="Nature">
        <title>The DNA sequence and biological annotation of human chromosome 1.</title>
        <authorList>
            <person name="Gregory S.G."/>
            <person name="Barlow K.F."/>
            <person name="McLay K.E."/>
            <person name="Kaul R."/>
            <person name="Swarbreck D."/>
            <person name="Dunham A."/>
            <person name="Scott C.E."/>
            <person name="Howe K.L."/>
            <person name="Woodfine K."/>
            <person name="Spencer C.C.A."/>
            <person name="Jones M.C."/>
            <person name="Gillson C."/>
            <person name="Searle S."/>
            <person name="Zhou Y."/>
            <person name="Kokocinski F."/>
            <person name="McDonald L."/>
            <person name="Evans R."/>
            <person name="Phillips K."/>
            <person name="Atkinson A."/>
            <person name="Cooper R."/>
            <person name="Jones C."/>
            <person name="Hall R.E."/>
            <person name="Andrews T.D."/>
            <person name="Lloyd C."/>
            <person name="Ainscough R."/>
            <person name="Almeida J.P."/>
            <person name="Ambrose K.D."/>
            <person name="Anderson F."/>
            <person name="Andrew R.W."/>
            <person name="Ashwell R.I.S."/>
            <person name="Aubin K."/>
            <person name="Babbage A.K."/>
            <person name="Bagguley C.L."/>
            <person name="Bailey J."/>
            <person name="Beasley H."/>
            <person name="Bethel G."/>
            <person name="Bird C.P."/>
            <person name="Bray-Allen S."/>
            <person name="Brown J.Y."/>
            <person name="Brown A.J."/>
            <person name="Buckley D."/>
            <person name="Burton J."/>
            <person name="Bye J."/>
            <person name="Carder C."/>
            <person name="Chapman J.C."/>
            <person name="Clark S.Y."/>
            <person name="Clarke G."/>
            <person name="Clee C."/>
            <person name="Cobley V."/>
            <person name="Collier R.E."/>
            <person name="Corby N."/>
            <person name="Coville G.J."/>
            <person name="Davies J."/>
            <person name="Deadman R."/>
            <person name="Dunn M."/>
            <person name="Earthrowl M."/>
            <person name="Ellington A.G."/>
            <person name="Errington H."/>
            <person name="Frankish A."/>
            <person name="Frankland J."/>
            <person name="French L."/>
            <person name="Garner P."/>
            <person name="Garnett J."/>
            <person name="Gay L."/>
            <person name="Ghori M.R.J."/>
            <person name="Gibson R."/>
            <person name="Gilby L.M."/>
            <person name="Gillett W."/>
            <person name="Glithero R.J."/>
            <person name="Grafham D.V."/>
            <person name="Griffiths C."/>
            <person name="Griffiths-Jones S."/>
            <person name="Grocock R."/>
            <person name="Hammond S."/>
            <person name="Harrison E.S.I."/>
            <person name="Hart E."/>
            <person name="Haugen E."/>
            <person name="Heath P.D."/>
            <person name="Holmes S."/>
            <person name="Holt K."/>
            <person name="Howden P.J."/>
            <person name="Hunt A.R."/>
            <person name="Hunt S.E."/>
            <person name="Hunter G."/>
            <person name="Isherwood J."/>
            <person name="James R."/>
            <person name="Johnson C."/>
            <person name="Johnson D."/>
            <person name="Joy A."/>
            <person name="Kay M."/>
            <person name="Kershaw J.K."/>
            <person name="Kibukawa M."/>
            <person name="Kimberley A.M."/>
            <person name="King A."/>
            <person name="Knights A.J."/>
            <person name="Lad H."/>
            <person name="Laird G."/>
            <person name="Lawlor S."/>
            <person name="Leongamornlert D.A."/>
            <person name="Lloyd D.M."/>
            <person name="Loveland J."/>
            <person name="Lovell J."/>
            <person name="Lush M.J."/>
            <person name="Lyne R."/>
            <person name="Martin S."/>
            <person name="Mashreghi-Mohammadi M."/>
            <person name="Matthews L."/>
            <person name="Matthews N.S.W."/>
            <person name="McLaren S."/>
            <person name="Milne S."/>
            <person name="Mistry S."/>
            <person name="Moore M.J.F."/>
            <person name="Nickerson T."/>
            <person name="O'Dell C.N."/>
            <person name="Oliver K."/>
            <person name="Palmeiri A."/>
            <person name="Palmer S.A."/>
            <person name="Parker A."/>
            <person name="Patel D."/>
            <person name="Pearce A.V."/>
            <person name="Peck A.I."/>
            <person name="Pelan S."/>
            <person name="Phelps K."/>
            <person name="Phillimore B.J."/>
            <person name="Plumb R."/>
            <person name="Rajan J."/>
            <person name="Raymond C."/>
            <person name="Rouse G."/>
            <person name="Saenphimmachak C."/>
            <person name="Sehra H.K."/>
            <person name="Sheridan E."/>
            <person name="Shownkeen R."/>
            <person name="Sims S."/>
            <person name="Skuce C.D."/>
            <person name="Smith M."/>
            <person name="Steward C."/>
            <person name="Subramanian S."/>
            <person name="Sycamore N."/>
            <person name="Tracey A."/>
            <person name="Tromans A."/>
            <person name="Van Helmond Z."/>
            <person name="Wall M."/>
            <person name="Wallis J.M."/>
            <person name="White S."/>
            <person name="Whitehead S.L."/>
            <person name="Wilkinson J.E."/>
            <person name="Willey D.L."/>
            <person name="Williams H."/>
            <person name="Wilming L."/>
            <person name="Wray P.W."/>
            <person name="Wu Z."/>
            <person name="Coulson A."/>
            <person name="Vaudin M."/>
            <person name="Sulston J.E."/>
            <person name="Durbin R.M."/>
            <person name="Hubbard T."/>
            <person name="Wooster R."/>
            <person name="Dunham I."/>
            <person name="Carter N.P."/>
            <person name="McVean G."/>
            <person name="Ross M.T."/>
            <person name="Harrow J."/>
            <person name="Olson M.V."/>
            <person name="Beck S."/>
            <person name="Rogers J."/>
            <person name="Bentley D.R."/>
        </authorList>
    </citation>
    <scope>NUCLEOTIDE SEQUENCE [LARGE SCALE GENOMIC DNA]</scope>
</reference>
<reference key="5">
    <citation type="submission" date="2005-09" db="EMBL/GenBank/DDBJ databases">
        <authorList>
            <person name="Mural R.J."/>
            <person name="Istrail S."/>
            <person name="Sutton G.G."/>
            <person name="Florea L."/>
            <person name="Halpern A.L."/>
            <person name="Mobarry C.M."/>
            <person name="Lippert R."/>
            <person name="Walenz B."/>
            <person name="Shatkay H."/>
            <person name="Dew I."/>
            <person name="Miller J.R."/>
            <person name="Flanigan M.J."/>
            <person name="Edwards N.J."/>
            <person name="Bolanos R."/>
            <person name="Fasulo D."/>
            <person name="Halldorsson B.V."/>
            <person name="Hannenhalli S."/>
            <person name="Turner R."/>
            <person name="Yooseph S."/>
            <person name="Lu F."/>
            <person name="Nusskern D.R."/>
            <person name="Shue B.C."/>
            <person name="Zheng X.H."/>
            <person name="Zhong F."/>
            <person name="Delcher A.L."/>
            <person name="Huson D.H."/>
            <person name="Kravitz S.A."/>
            <person name="Mouchard L."/>
            <person name="Reinert K."/>
            <person name="Remington K.A."/>
            <person name="Clark A.G."/>
            <person name="Waterman M.S."/>
            <person name="Eichler E.E."/>
            <person name="Adams M.D."/>
            <person name="Hunkapiller M.W."/>
            <person name="Myers E.W."/>
            <person name="Venter J.C."/>
        </authorList>
    </citation>
    <scope>NUCLEOTIDE SEQUENCE [LARGE SCALE GENOMIC DNA]</scope>
</reference>
<reference key="6">
    <citation type="journal article" date="2004" name="Genome Res.">
        <title>The status, quality, and expansion of the NIH full-length cDNA project: the Mammalian Gene Collection (MGC).</title>
        <authorList>
            <consortium name="The MGC Project Team"/>
        </authorList>
    </citation>
    <scope>NUCLEOTIDE SEQUENCE [LARGE SCALE MRNA]</scope>
</reference>
<proteinExistence type="evidence at protein level"/>
<name>LENEP_HUMAN</name>
<protein>
    <recommendedName>
        <fullName>Lens epithelial cell protein LEP503</fullName>
    </recommendedName>
</protein>
<dbReference type="EMBL" id="AF268478">
    <property type="protein sequence ID" value="AAF73074.1"/>
    <property type="molecule type" value="mRNA"/>
</dbReference>
<dbReference type="EMBL" id="AF144412">
    <property type="protein sequence ID" value="AAD38378.1"/>
    <property type="molecule type" value="Genomic_DNA"/>
</dbReference>
<dbReference type="EMBL" id="AB451457">
    <property type="protein sequence ID" value="BAG70271.1"/>
    <property type="molecule type" value="mRNA"/>
</dbReference>
<dbReference type="EMBL" id="AL451085">
    <property type="status" value="NOT_ANNOTATED_CDS"/>
    <property type="molecule type" value="Genomic_DNA"/>
</dbReference>
<dbReference type="EMBL" id="CH471121">
    <property type="protein sequence ID" value="EAW53152.1"/>
    <property type="molecule type" value="Genomic_DNA"/>
</dbReference>
<dbReference type="EMBL" id="BC069140">
    <property type="protein sequence ID" value="AAH69140.1"/>
    <property type="molecule type" value="mRNA"/>
</dbReference>
<dbReference type="EMBL" id="BC096714">
    <property type="protein sequence ID" value="AAH96714.1"/>
    <property type="molecule type" value="mRNA"/>
</dbReference>
<dbReference type="EMBL" id="BC098148">
    <property type="protein sequence ID" value="AAH98148.1"/>
    <property type="molecule type" value="mRNA"/>
</dbReference>
<dbReference type="EMBL" id="BC098246">
    <property type="protein sequence ID" value="AAH98246.1"/>
    <property type="molecule type" value="mRNA"/>
</dbReference>
<dbReference type="EMBL" id="BC098253">
    <property type="protein sequence ID" value="AAH98253.1"/>
    <property type="molecule type" value="mRNA"/>
</dbReference>
<dbReference type="CCDS" id="CCDS1080.1"/>
<dbReference type="RefSeq" id="NP_001381459.1">
    <property type="nucleotide sequence ID" value="NM_001394530.1"/>
</dbReference>
<dbReference type="RefSeq" id="NP_061125.1">
    <property type="nucleotide sequence ID" value="NM_018655.3"/>
</dbReference>
<dbReference type="BioGRID" id="120981">
    <property type="interactions" value="10"/>
</dbReference>
<dbReference type="FunCoup" id="Q9Y5L5">
    <property type="interactions" value="1"/>
</dbReference>
<dbReference type="IntAct" id="Q9Y5L5">
    <property type="interactions" value="10"/>
</dbReference>
<dbReference type="STRING" id="9606.ENSP00000376278"/>
<dbReference type="iPTMnet" id="Q9Y5L5"/>
<dbReference type="PhosphoSitePlus" id="Q9Y5L5"/>
<dbReference type="BioMuta" id="LENEP"/>
<dbReference type="PaxDb" id="9606-ENSP00000376278"/>
<dbReference type="PeptideAtlas" id="Q9Y5L5"/>
<dbReference type="Antibodypedia" id="48815">
    <property type="antibodies" value="7 antibodies from 2 providers"/>
</dbReference>
<dbReference type="DNASU" id="55891"/>
<dbReference type="Ensembl" id="ENST00000368427.3">
    <property type="protein sequence ID" value="ENSP00000357412.3"/>
    <property type="gene ID" value="ENSG00000163352.6"/>
</dbReference>
<dbReference type="Ensembl" id="ENST00000392487.2">
    <property type="protein sequence ID" value="ENSP00000376278.1"/>
    <property type="gene ID" value="ENSG00000163352.6"/>
</dbReference>
<dbReference type="GeneID" id="55891"/>
<dbReference type="KEGG" id="hsa:55891"/>
<dbReference type="MANE-Select" id="ENST00000392487.2">
    <property type="protein sequence ID" value="ENSP00000376278.1"/>
    <property type="RefSeq nucleotide sequence ID" value="NM_001394530.1"/>
    <property type="RefSeq protein sequence ID" value="NP_001381459.1"/>
</dbReference>
<dbReference type="UCSC" id="uc001fgi.3">
    <property type="organism name" value="human"/>
</dbReference>
<dbReference type="AGR" id="HGNC:14429"/>
<dbReference type="CTD" id="55891"/>
<dbReference type="GeneCards" id="LENEP"/>
<dbReference type="HGNC" id="HGNC:14429">
    <property type="gene designation" value="LENEP"/>
</dbReference>
<dbReference type="HPA" id="ENSG00000163352">
    <property type="expression patterns" value="Not detected"/>
</dbReference>
<dbReference type="MIM" id="607377">
    <property type="type" value="gene"/>
</dbReference>
<dbReference type="neXtProt" id="NX_Q9Y5L5"/>
<dbReference type="OpenTargets" id="ENSG00000163352"/>
<dbReference type="PharmGKB" id="PA30333"/>
<dbReference type="VEuPathDB" id="HostDB:ENSG00000163352"/>
<dbReference type="eggNOG" id="ENOG502SAUH">
    <property type="taxonomic scope" value="Eukaryota"/>
</dbReference>
<dbReference type="GeneTree" id="ENSGT00390000002996"/>
<dbReference type="HOGENOM" id="CLU_2921930_0_0_1"/>
<dbReference type="InParanoid" id="Q9Y5L5"/>
<dbReference type="OMA" id="MQARTQP"/>
<dbReference type="OrthoDB" id="8727558at2759"/>
<dbReference type="PAN-GO" id="Q9Y5L5">
    <property type="GO annotations" value="0 GO annotations based on evolutionary models"/>
</dbReference>
<dbReference type="PhylomeDB" id="Q9Y5L5"/>
<dbReference type="TreeFam" id="TF341569"/>
<dbReference type="PathwayCommons" id="Q9Y5L5"/>
<dbReference type="SignaLink" id="Q9Y5L5"/>
<dbReference type="BioGRID-ORCS" id="55891">
    <property type="hits" value="10 hits in 1124 CRISPR screens"/>
</dbReference>
<dbReference type="GenomeRNAi" id="55891"/>
<dbReference type="Pharos" id="Q9Y5L5">
    <property type="development level" value="Tdark"/>
</dbReference>
<dbReference type="PRO" id="PR:Q9Y5L5"/>
<dbReference type="Proteomes" id="UP000005640">
    <property type="component" value="Chromosome 1"/>
</dbReference>
<dbReference type="RNAct" id="Q9Y5L5">
    <property type="molecule type" value="protein"/>
</dbReference>
<dbReference type="Bgee" id="ENSG00000163352">
    <property type="expression patterns" value="Expressed in granulocyte and 72 other cell types or tissues"/>
</dbReference>
<dbReference type="GO" id="GO:0003677">
    <property type="term" value="F:DNA binding"/>
    <property type="evidence" value="ECO:0000304"/>
    <property type="project" value="ProtInc"/>
</dbReference>
<dbReference type="GO" id="GO:0002088">
    <property type="term" value="P:lens development in camera-type eye"/>
    <property type="evidence" value="ECO:0000304"/>
    <property type="project" value="ProtInc"/>
</dbReference>
<dbReference type="InterPro" id="IPR029194">
    <property type="entry name" value="LEP503"/>
</dbReference>
<dbReference type="PANTHER" id="PTHR16968">
    <property type="entry name" value="LENS EPITHELIAL CELL PROTEIN LEP503"/>
    <property type="match status" value="1"/>
</dbReference>
<dbReference type="PANTHER" id="PTHR16968:SF2">
    <property type="entry name" value="LENS EPITHELIAL CELL PROTEIN LEP503"/>
    <property type="match status" value="1"/>
</dbReference>
<dbReference type="Pfam" id="PF15221">
    <property type="entry name" value="LEP503"/>
    <property type="match status" value="1"/>
</dbReference>
<organism>
    <name type="scientific">Homo sapiens</name>
    <name type="common">Human</name>
    <dbReference type="NCBI Taxonomy" id="9606"/>
    <lineage>
        <taxon>Eukaryota</taxon>
        <taxon>Metazoa</taxon>
        <taxon>Chordata</taxon>
        <taxon>Craniata</taxon>
        <taxon>Vertebrata</taxon>
        <taxon>Euteleostomi</taxon>
        <taxon>Mammalia</taxon>
        <taxon>Eutheria</taxon>
        <taxon>Euarchontoglires</taxon>
        <taxon>Primates</taxon>
        <taxon>Haplorrhini</taxon>
        <taxon>Catarrhini</taxon>
        <taxon>Hominidae</taxon>
        <taxon>Homo</taxon>
    </lineage>
</organism>